<comment type="function">
    <text>May be a myofibrillar protein.</text>
</comment>
<sequence>MEKAREGAPSKERRSAEETISRETRHEIAGNDGDIGTDNIEYIDSMDSTGLGYGRTGEGISRILYEHPRDELINYKRRIDANTEQQREHADIMAALQRKIEEYRRRFAEIEGRLVVHDLNESGDLVNMKLKEEWLLSPKIKMEEISDVDFPNQLEDERRRAEDLAIQLQQERLQNDQLQSEIQRLRQQFGICIRDKERIYQTRERNFTRFLGEEQRKMMELWSELQRVRKQCAEYREQTERDLENQRNEFIKVIRHVSGIVRGLNIENGTHTLLSDLSSESGVEITQDTVLIEAVKRFHESQQQTAPVIGPELITELRLARAEDAGLHDELMRKYEESAKRIIELEARDDESHNKLVALESDLKRTRDRLAESQNALRKLYDMTYSYEINAEKETRSPSPTKGYVPPPEVVRSVRYVLNSRANDNNVLQRKLKNAEVQISELTTKNDSLEEIRRRLEKRIAEANRTITHRQRELDDAKHTVKDLEDRLKSLEQEKASIDSARHHLEDEIRKMREQFNSTLLDVERRAAEDADERIRKIDEETKIRISELTNRIEMLLEENKRLKDENDGMKNRIQDIEKEYNTIIRKLEEKDNALKNLENTRQRLVNELEEQRTRFDTMTSEFDNLRTNYDSANKNTVAIELTVKQIKEQRDEIIKQKDKLAKELADLENKLNNETKMRGDAEKLNQRHLDEIDNFKKQINEYITEVTIIRRQNDDFDTQMKTNQAKLSSMKNSLIAAKKEIEKLSEMNNRLQQDKNDLIGAKQKGDTELNLLTEKIRKVEIEFERIKKDNQELEDHERTARDDLKQETNRNHLLAKELEEARADIVALNDRLAKMDANFKIKLDETIKKSPADHETIKSRESKSEKIIVKHETKIYEINKYRAELEKLESDKDDLEKRIIGLQDELNEKDRDTDRLNAEIDDLKRKLQTEIEKVRKETTTVQERYHIEWDEERDNHQKKIDSMNALIDELRSKLNDAERAMADLQNRDSILERENNDWKEKSDALNMELDRLRDELLSVRRDAEKEINRYNTDLQTAARNEIKLLTPTNNEMKSQLNAAEDKINSLNKVITDQQNKIRDLTGEVHHLEGELKDAKGNVANLESELDTTRERIHLLGEQNASLQTELNKIKGDIDSLFGENDMLKTAKESNEAEIDRLKQKLQRSIENAKKYSDALDKLRPEYDRLQNLYREKIKQAENLTQAVQDLESRLNQSRRELRDATDKLIASEGDRNALRSEVEKLQHEVQFMREQLLRKTDEYQAALSDLVNAHRTAEDGRVNAVQALEARKYEINDLQSRLDNAEQYLVTLQQNYVAVENERDMLYDALRRLHSMIDRTVTINRFLIGVDESMDEKKETVLQTQKSPDGKSKERFDISDLDTNIQKLIGRIEKLELERNEYRDALDRIKKKSIESHIKINKQETIFTNIEDQLVDVEEEKRTLEMRLASAKQLLRSQEEALKQRDEERSHMKLKIAKFEMEARGKEAQLRQLNELVRNLRKDLETAQGDLGVLHDHEERWYAHKFHLESKLKDQESESQQIRLLVANFETERNSLNEKVRDLASRLQQTESKNADMKEDNDRLKKDLIKASTNEAELRRTIDQNSRVVSDNQILKDQLESAQNDLSNANNRKQQLENELLVVRSELRDLKQRFSDNANRIIDLQRHLTDAENDKKRLTNRLNSLEKTVSQQRTIETEIRQQLSLALNERNTLQNDLRDLQRRLARMETEKKIMNDKYDELEKIRASLIKRIELLDEEKRTMENILHETALQREAIESSLNALERENKELHRNCAQLQQQIAQLELENGNRLIQLTNKQREEYDKFAQNMRTEKIQIERIIENRERSLKSRINQLENQLNIMRDQLNSERRRRREISDKILSGEVNKLNVTLSGIPDAYEMYDRTLYTYNTYFGSPSFTVGSSSFDPNITDDSKIILKHSDRLESSYAYGGGNRTSDTAVTAPTGSSSYHGQRSDTHTVNESERGGNDSGKGTKQVDGEGGSLSLSEIGQGATFEQQQQRRRKRQ</sequence>
<feature type="chain" id="PRO_0000064603" description="Major antigen">
    <location>
        <begin position="1"/>
        <end position="2022"/>
    </location>
</feature>
<feature type="region of interest" description="Disordered" evidence="2">
    <location>
        <begin position="1"/>
        <end position="39"/>
    </location>
</feature>
<feature type="region of interest" description="Disordered" evidence="2">
    <location>
        <begin position="1944"/>
        <end position="2022"/>
    </location>
</feature>
<feature type="coiled-coil region" evidence="1">
    <location>
        <begin position="74"/>
        <end position="120"/>
    </location>
</feature>
<feature type="coiled-coil region" evidence="1">
    <location>
        <begin position="151"/>
        <end position="251"/>
    </location>
</feature>
<feature type="coiled-coil region" evidence="1">
    <location>
        <begin position="327"/>
        <end position="384"/>
    </location>
</feature>
<feature type="coiled-coil region" evidence="1">
    <location>
        <begin position="417"/>
        <end position="1879"/>
    </location>
</feature>
<feature type="compositionally biased region" description="Basic and acidic residues" evidence="2">
    <location>
        <begin position="1"/>
        <end position="29"/>
    </location>
</feature>
<feature type="compositionally biased region" description="Polar residues" evidence="2">
    <location>
        <begin position="1951"/>
        <end position="1968"/>
    </location>
</feature>
<feature type="compositionally biased region" description="Basic and acidic residues" evidence="2">
    <location>
        <begin position="1969"/>
        <end position="1983"/>
    </location>
</feature>
<feature type="sequence conflict" description="In Ref. 3; AAA29414." evidence="3" ref="3">
    <location>
        <position position="1038"/>
    </location>
</feature>
<feature type="sequence conflict" description="In Ref. 3; AAA29414." evidence="3" ref="3">
    <original>P</original>
    <variation>S</variation>
    <location>
        <position position="1048"/>
    </location>
</feature>
<feature type="sequence conflict" description="In Ref. 3; AAA29414." evidence="3" ref="3">
    <original>A</original>
    <variation>E</variation>
    <location>
        <position position="1284"/>
    </location>
</feature>
<organism>
    <name type="scientific">Onchocerca volvulus</name>
    <dbReference type="NCBI Taxonomy" id="6282"/>
    <lineage>
        <taxon>Eukaryota</taxon>
        <taxon>Metazoa</taxon>
        <taxon>Ecdysozoa</taxon>
        <taxon>Nematoda</taxon>
        <taxon>Chromadorea</taxon>
        <taxon>Rhabditida</taxon>
        <taxon>Spirurina</taxon>
        <taxon>Spiruromorpha</taxon>
        <taxon>Filarioidea</taxon>
        <taxon>Onchocercidae</taxon>
        <taxon>Onchocerca</taxon>
    </lineage>
</organism>
<dbReference type="EMBL" id="U12681">
    <property type="protein sequence ID" value="AAA80009.1"/>
    <property type="molecule type" value="mRNA"/>
</dbReference>
<dbReference type="EMBL" id="J03995">
    <property type="protein sequence ID" value="AAA29412.1"/>
    <property type="molecule type" value="mRNA"/>
</dbReference>
<dbReference type="EMBL" id="M30400">
    <property type="protein sequence ID" value="AAA29414.1"/>
    <property type="molecule type" value="Genomic_DNA"/>
</dbReference>
<dbReference type="EMBL" id="M30399">
    <property type="protein sequence ID" value="AAA29414.1"/>
    <property type="status" value="JOINED"/>
    <property type="molecule type" value="Genomic_DNA"/>
</dbReference>
<dbReference type="PIR" id="T43214">
    <property type="entry name" value="T43214"/>
</dbReference>
<dbReference type="SMR" id="P21249"/>
<dbReference type="STRING" id="6282.P21249"/>
<dbReference type="HOGENOM" id="CLU_000978_0_0_1"/>
<dbReference type="Proteomes" id="UP000024404">
    <property type="component" value="Unassembled WGS sequence"/>
</dbReference>
<dbReference type="Gene3D" id="1.10.287.1490">
    <property type="match status" value="2"/>
</dbReference>
<dbReference type="InterPro" id="IPR055167">
    <property type="entry name" value="Rootletin-like_CC"/>
</dbReference>
<dbReference type="PANTHER" id="PTHR23159">
    <property type="entry name" value="CENTROSOMAL PROTEIN 2"/>
    <property type="match status" value="1"/>
</dbReference>
<dbReference type="PANTHER" id="PTHR23159:SF31">
    <property type="entry name" value="CENTROSOME-ASSOCIATED PROTEIN CEP250 ISOFORM X1"/>
    <property type="match status" value="1"/>
</dbReference>
<dbReference type="Pfam" id="PF24423">
    <property type="entry name" value="OVT1"/>
    <property type="match status" value="1"/>
</dbReference>
<dbReference type="Pfam" id="PF24627">
    <property type="entry name" value="PUMA_CC"/>
    <property type="match status" value="1"/>
</dbReference>
<dbReference type="Pfam" id="PF15035">
    <property type="entry name" value="Rootletin"/>
    <property type="match status" value="1"/>
</dbReference>
<dbReference type="SUPFAM" id="SSF57997">
    <property type="entry name" value="Tropomyosin"/>
    <property type="match status" value="4"/>
</dbReference>
<name>ANT1_ONCVO</name>
<proteinExistence type="evidence at transcript level"/>
<protein>
    <recommendedName>
        <fullName>Major antigen</fullName>
    </recommendedName>
    <alternativeName>
        <fullName>Myosin-like antigen</fullName>
    </alternativeName>
</protein>
<evidence type="ECO:0000255" key="1"/>
<evidence type="ECO:0000256" key="2">
    <source>
        <dbReference type="SAM" id="MobiDB-lite"/>
    </source>
</evidence>
<evidence type="ECO:0000305" key="3"/>
<reference key="1">
    <citation type="journal article" date="1995" name="Mol. Biochem. Parasitol.">
        <title>Molecular cloning of a gene expressed during early embryonic development in Onchocerca volvulus.</title>
        <authorList>
            <person name="Triteeraprapab S."/>
            <person name="Richie T.L."/>
            <person name="Tuan R.S."/>
            <person name="Shepley K.J."/>
            <person name="Dinman J.D."/>
            <person name="Neubert T.A."/>
            <person name="Scott A.L."/>
        </authorList>
    </citation>
    <scope>NUCLEOTIDE SEQUENCE [MRNA]</scope>
</reference>
<reference key="2">
    <citation type="journal article" date="1988" name="Mol. Biochem. Parasitol.">
        <title>Construction of Onchocerca volvulus cDNA libraries and partial characterization of the cDNA for a major antigen.</title>
        <authorList>
            <person name="Donelson J.E."/>
            <person name="Duke B.O.L."/>
            <person name="Moser D."/>
            <person name="Zeng W."/>
            <person name="Erondu N.E."/>
            <person name="Lucius R."/>
            <person name="Renz A."/>
            <person name="Karam M."/>
            <person name="Flores G.Z."/>
        </authorList>
    </citation>
    <scope>NUCLEOTIDE SEQUENCE [MRNA] OF 733-866</scope>
</reference>
<reference key="3">
    <citation type="journal article" date="1990" name="Mol. Biochem. Parasitol.">
        <title>Characterization of a myosin-like antigen from Onchocerca volvulus.</title>
        <authorList>
            <person name="Ngozi E."/>
            <person name="Erondu N.E."/>
            <person name="Donelson J.E."/>
        </authorList>
    </citation>
    <scope>NUCLEOTIDE SEQUENCE [GENOMIC DNA] OF 1020-1363</scope>
</reference>
<gene>
    <name type="primary">OVT1</name>
</gene>
<accession>P21249</accession>
<accession>Q25614</accession>
<keyword id="KW-0175">Coiled coil</keyword>
<keyword id="KW-1185">Reference proteome</keyword>